<proteinExistence type="inferred from homology"/>
<name>SYDP_PHOPR</name>
<feature type="chain" id="PRO_0000298253" description="Protein Syd">
    <location>
        <begin position="1"/>
        <end position="184"/>
    </location>
</feature>
<evidence type="ECO:0000255" key="1">
    <source>
        <dbReference type="HAMAP-Rule" id="MF_01104"/>
    </source>
</evidence>
<evidence type="ECO:0000305" key="2"/>
<dbReference type="EMBL" id="CR378672">
    <property type="protein sequence ID" value="CAG21315.1"/>
    <property type="status" value="ALT_INIT"/>
    <property type="molecule type" value="Genomic_DNA"/>
</dbReference>
<dbReference type="RefSeq" id="WP_041394495.1">
    <property type="nucleotide sequence ID" value="NC_006370.1"/>
</dbReference>
<dbReference type="SMR" id="Q6LN11"/>
<dbReference type="STRING" id="298386.PBPRA2981"/>
<dbReference type="KEGG" id="ppr:PBPRA2981"/>
<dbReference type="eggNOG" id="ENOG502ZCMR">
    <property type="taxonomic scope" value="Bacteria"/>
</dbReference>
<dbReference type="HOGENOM" id="CLU_121866_0_0_6"/>
<dbReference type="Proteomes" id="UP000000593">
    <property type="component" value="Chromosome 1"/>
</dbReference>
<dbReference type="GO" id="GO:0009898">
    <property type="term" value="C:cytoplasmic side of plasma membrane"/>
    <property type="evidence" value="ECO:0007669"/>
    <property type="project" value="InterPro"/>
</dbReference>
<dbReference type="CDD" id="cd16323">
    <property type="entry name" value="Syd"/>
    <property type="match status" value="1"/>
</dbReference>
<dbReference type="Gene3D" id="3.40.1580.20">
    <property type="entry name" value="Syd protein"/>
    <property type="match status" value="1"/>
</dbReference>
<dbReference type="HAMAP" id="MF_01104">
    <property type="entry name" value="Syd"/>
    <property type="match status" value="1"/>
</dbReference>
<dbReference type="InterPro" id="IPR009948">
    <property type="entry name" value="Syd"/>
</dbReference>
<dbReference type="InterPro" id="IPR038228">
    <property type="entry name" value="Syd_sf"/>
</dbReference>
<dbReference type="NCBIfam" id="NF003439">
    <property type="entry name" value="PRK04968.1"/>
    <property type="match status" value="1"/>
</dbReference>
<dbReference type="Pfam" id="PF07348">
    <property type="entry name" value="Syd"/>
    <property type="match status" value="1"/>
</dbReference>
<keyword id="KW-0997">Cell inner membrane</keyword>
<keyword id="KW-1003">Cell membrane</keyword>
<keyword id="KW-0472">Membrane</keyword>
<keyword id="KW-1185">Reference proteome</keyword>
<organism>
    <name type="scientific">Photobacterium profundum (strain SS9)</name>
    <dbReference type="NCBI Taxonomy" id="298386"/>
    <lineage>
        <taxon>Bacteria</taxon>
        <taxon>Pseudomonadati</taxon>
        <taxon>Pseudomonadota</taxon>
        <taxon>Gammaproteobacteria</taxon>
        <taxon>Vibrionales</taxon>
        <taxon>Vibrionaceae</taxon>
        <taxon>Photobacterium</taxon>
    </lineage>
</organism>
<comment type="function">
    <text evidence="1">Interacts with the SecY protein in vivo. May bind preferentially to an uncomplexed state of SecY, thus functioning either as a chelating agent for excess SecY in the cell or as a regulatory factor that negatively controls the translocase function.</text>
</comment>
<comment type="subcellular location">
    <subcellularLocation>
        <location evidence="1">Cell inner membrane</location>
        <topology evidence="1">Peripheral membrane protein</topology>
        <orientation evidence="1">Cytoplasmic side</orientation>
    </subcellularLocation>
    <text evidence="1">Loosely associated with the cytoplasmic side of the inner membrane, probably via SecY.</text>
</comment>
<comment type="similarity">
    <text evidence="1">Belongs to the Syd family.</text>
</comment>
<comment type="sequence caution" evidence="2">
    <conflict type="erroneous initiation">
        <sequence resource="EMBL-CDS" id="CAG21315"/>
    </conflict>
</comment>
<sequence length="184" mass="20382">MNHPVAVALSDFSSLFLQAWRDTGHGFPRSEDLVGLESPCVEHDSGDEVTWKPITRQPQGDLAGVEKGIEIELHKDIIDFYSTQFSGDMAAKFGEIELDLLQVFSEQDGVRLQENILGHLVTQRRLKLKPTVFIGVIDSADKVIAICNLTGEVILETLGKNERDVLAKDVASFLQQLVPVVREA</sequence>
<reference key="1">
    <citation type="journal article" date="2005" name="Science">
        <title>Life at depth: Photobacterium profundum genome sequence and expression analysis.</title>
        <authorList>
            <person name="Vezzi A."/>
            <person name="Campanaro S."/>
            <person name="D'Angelo M."/>
            <person name="Simonato F."/>
            <person name="Vitulo N."/>
            <person name="Lauro F.M."/>
            <person name="Cestaro A."/>
            <person name="Malacrida G."/>
            <person name="Simionati B."/>
            <person name="Cannata N."/>
            <person name="Romualdi C."/>
            <person name="Bartlett D.H."/>
            <person name="Valle G."/>
        </authorList>
    </citation>
    <scope>NUCLEOTIDE SEQUENCE [LARGE SCALE GENOMIC DNA]</scope>
    <source>
        <strain>ATCC BAA-1253 / SS9</strain>
    </source>
</reference>
<gene>
    <name evidence="1" type="primary">syd</name>
    <name type="ordered locus">PBPRA2981</name>
</gene>
<accession>Q6LN11</accession>
<protein>
    <recommendedName>
        <fullName evidence="1">Protein Syd</fullName>
    </recommendedName>
</protein>